<gene>
    <name evidence="1" type="primary">codY</name>
    <name type="ordered locus">spyM18_1846</name>
</gene>
<name>CODY_STRP8</name>
<evidence type="ECO:0000255" key="1">
    <source>
        <dbReference type="HAMAP-Rule" id="MF_00621"/>
    </source>
</evidence>
<protein>
    <recommendedName>
        <fullName evidence="1">Global transcriptional regulator CodY</fullName>
    </recommendedName>
</protein>
<keyword id="KW-0963">Cytoplasm</keyword>
<keyword id="KW-0238">DNA-binding</keyword>
<keyword id="KW-0678">Repressor</keyword>
<keyword id="KW-0804">Transcription</keyword>
<keyword id="KW-0805">Transcription regulation</keyword>
<comment type="function">
    <text evidence="1">DNA-binding global transcriptional regulator which is involved in the adaptive response to starvation and acts by directly or indirectly controlling the expression of numerous genes in response to nutrient availability. During rapid exponential growth, CodY is highly active and represses genes whose products allow adaptation to nutrient depletion.</text>
</comment>
<comment type="subcellular location">
    <subcellularLocation>
        <location evidence="1">Cytoplasm</location>
    </subcellularLocation>
</comment>
<comment type="similarity">
    <text evidence="1">Belongs to the CodY family.</text>
</comment>
<dbReference type="EMBL" id="AE009949">
    <property type="protein sequence ID" value="AAL98361.1"/>
    <property type="molecule type" value="Genomic_DNA"/>
</dbReference>
<dbReference type="RefSeq" id="WP_002983278.1">
    <property type="nucleotide sequence ID" value="NC_003485.1"/>
</dbReference>
<dbReference type="SMR" id="P0A351"/>
<dbReference type="KEGG" id="spm:spyM18_1846"/>
<dbReference type="HOGENOM" id="CLU_089581_0_0_9"/>
<dbReference type="GO" id="GO:0005737">
    <property type="term" value="C:cytoplasm"/>
    <property type="evidence" value="ECO:0007669"/>
    <property type="project" value="UniProtKB-SubCell"/>
</dbReference>
<dbReference type="GO" id="GO:0003677">
    <property type="term" value="F:DNA binding"/>
    <property type="evidence" value="ECO:0007669"/>
    <property type="project" value="UniProtKB-UniRule"/>
</dbReference>
<dbReference type="GO" id="GO:0003700">
    <property type="term" value="F:DNA-binding transcription factor activity"/>
    <property type="evidence" value="ECO:0007669"/>
    <property type="project" value="InterPro"/>
</dbReference>
<dbReference type="GO" id="GO:0005525">
    <property type="term" value="F:GTP binding"/>
    <property type="evidence" value="ECO:0007669"/>
    <property type="project" value="InterPro"/>
</dbReference>
<dbReference type="GO" id="GO:0045892">
    <property type="term" value="P:negative regulation of DNA-templated transcription"/>
    <property type="evidence" value="ECO:0007669"/>
    <property type="project" value="UniProtKB-UniRule"/>
</dbReference>
<dbReference type="CDD" id="cd00090">
    <property type="entry name" value="HTH_ARSR"/>
    <property type="match status" value="1"/>
</dbReference>
<dbReference type="FunFam" id="1.10.10.10:FF:000034">
    <property type="entry name" value="GTP-sensing transcriptional pleiotropic repressor CodY"/>
    <property type="match status" value="1"/>
</dbReference>
<dbReference type="FunFam" id="3.30.450.40:FF:000003">
    <property type="entry name" value="GTP-sensing transcriptional pleiotropic repressor CodY"/>
    <property type="match status" value="1"/>
</dbReference>
<dbReference type="Gene3D" id="3.30.450.40">
    <property type="match status" value="1"/>
</dbReference>
<dbReference type="Gene3D" id="1.10.10.10">
    <property type="entry name" value="Winged helix-like DNA-binding domain superfamily/Winged helix DNA-binding domain"/>
    <property type="match status" value="1"/>
</dbReference>
<dbReference type="HAMAP" id="MF_00621">
    <property type="entry name" value="HTH_type_CodY"/>
    <property type="match status" value="1"/>
</dbReference>
<dbReference type="InterPro" id="IPR011991">
    <property type="entry name" value="ArsR-like_HTH"/>
</dbReference>
<dbReference type="InterPro" id="IPR014154">
    <property type="entry name" value="CodY"/>
</dbReference>
<dbReference type="InterPro" id="IPR029016">
    <property type="entry name" value="GAF-like_dom_sf"/>
</dbReference>
<dbReference type="InterPro" id="IPR013198">
    <property type="entry name" value="GTP_trans_reg_CodY_C"/>
</dbReference>
<dbReference type="InterPro" id="IPR010312">
    <property type="entry name" value="Transc_reg_CodY_N"/>
</dbReference>
<dbReference type="InterPro" id="IPR036388">
    <property type="entry name" value="WH-like_DNA-bd_sf"/>
</dbReference>
<dbReference type="InterPro" id="IPR036390">
    <property type="entry name" value="WH_DNA-bd_sf"/>
</dbReference>
<dbReference type="NCBIfam" id="TIGR02787">
    <property type="entry name" value="codY_Gpos"/>
    <property type="match status" value="1"/>
</dbReference>
<dbReference type="NCBIfam" id="NF003170">
    <property type="entry name" value="PRK04158.1"/>
    <property type="match status" value="1"/>
</dbReference>
<dbReference type="PANTHER" id="PTHR40062:SF1">
    <property type="entry name" value="GLOBAL TRANSCRIPTIONAL REGULATOR CODY"/>
    <property type="match status" value="1"/>
</dbReference>
<dbReference type="PANTHER" id="PTHR40062">
    <property type="entry name" value="GTP-SENSING TRANSCRIPTIONAL PLEIOTROPIC REPRESSOR CODY"/>
    <property type="match status" value="1"/>
</dbReference>
<dbReference type="Pfam" id="PF06018">
    <property type="entry name" value="CodY"/>
    <property type="match status" value="1"/>
</dbReference>
<dbReference type="Pfam" id="PF08222">
    <property type="entry name" value="HTH_CodY"/>
    <property type="match status" value="1"/>
</dbReference>
<dbReference type="PIRSF" id="PIRSF011572">
    <property type="entry name" value="GTP_sensing_CodY"/>
    <property type="match status" value="1"/>
</dbReference>
<dbReference type="SUPFAM" id="SSF46785">
    <property type="entry name" value="Winged helix' DNA-binding domain"/>
    <property type="match status" value="1"/>
</dbReference>
<feature type="chain" id="PRO_0000213247" description="Global transcriptional regulator CodY">
    <location>
        <begin position="1"/>
        <end position="260"/>
    </location>
</feature>
<feature type="DNA-binding region" description="H-T-H motif" evidence="1">
    <location>
        <begin position="207"/>
        <end position="226"/>
    </location>
</feature>
<feature type="region of interest" description="GAF domain" evidence="1">
    <location>
        <begin position="1"/>
        <end position="159"/>
    </location>
</feature>
<accession>P0A351</accession>
<accession>Q99YB7</accession>
<organism>
    <name type="scientific">Streptococcus pyogenes serotype M18 (strain MGAS8232)</name>
    <dbReference type="NCBI Taxonomy" id="186103"/>
    <lineage>
        <taxon>Bacteria</taxon>
        <taxon>Bacillati</taxon>
        <taxon>Bacillota</taxon>
        <taxon>Bacilli</taxon>
        <taxon>Lactobacillales</taxon>
        <taxon>Streptococcaceae</taxon>
        <taxon>Streptococcus</taxon>
    </lineage>
</organism>
<proteinExistence type="inferred from homology"/>
<sequence length="260" mass="28634">MPNLLEKTRKITSILQRSVDSLETELPYNTMASRLADIIDCNACIINGGGTLLGYAMKYKTNTDRVEEFFEAKQFPDTYVKAASRVYDTEANLSVENELTIFPVESKDTYPGGLTTIAPIYGGGMRLGSLIIWRNDNEFSDDDLILVEISSTVVGIQLLNLQTENLEDTIRKQTAVNMAINTLSYSEMKAVAAILGELDGNEGRLTASVIADRIGITRSVIVNALRKLESAGIIESRSLGMKGTYLKVINEGIFAKLKEF</sequence>
<reference key="1">
    <citation type="journal article" date="2002" name="Proc. Natl. Acad. Sci. U.S.A.">
        <title>Genome sequence and comparative microarray analysis of serotype M18 group A Streptococcus strains associated with acute rheumatic fever outbreaks.</title>
        <authorList>
            <person name="Smoot J.C."/>
            <person name="Barbian K.D."/>
            <person name="Van Gompel J.J."/>
            <person name="Smoot L.M."/>
            <person name="Chaussee M.S."/>
            <person name="Sylva G.L."/>
            <person name="Sturdevant D.E."/>
            <person name="Ricklefs S.M."/>
            <person name="Porcella S.F."/>
            <person name="Parkins L.D."/>
            <person name="Beres S.B."/>
            <person name="Campbell D.S."/>
            <person name="Smith T.M."/>
            <person name="Zhang Q."/>
            <person name="Kapur V."/>
            <person name="Daly J.A."/>
            <person name="Veasy L.G."/>
            <person name="Musser J.M."/>
        </authorList>
    </citation>
    <scope>NUCLEOTIDE SEQUENCE [LARGE SCALE GENOMIC DNA]</scope>
    <source>
        <strain>MGAS8232</strain>
    </source>
</reference>